<protein>
    <recommendedName>
        <fullName>Probable serine/threonine-protein phosphatase 2A activator 1</fullName>
        <ecNumber>5.2.1.8</ecNumber>
    </recommendedName>
    <alternativeName>
        <fullName>Peptidyl-prolyl cis-trans isomerase PTPA-1</fullName>
        <shortName>PPIase PTPA-1</shortName>
        <shortName>Rotamase PTPA-1</shortName>
    </alternativeName>
    <alternativeName>
        <fullName>Phosphotyrosyl phosphatase activator 1</fullName>
    </alternativeName>
</protein>
<organism>
    <name type="scientific">Dictyostelium discoideum</name>
    <name type="common">Social amoeba</name>
    <dbReference type="NCBI Taxonomy" id="44689"/>
    <lineage>
        <taxon>Eukaryota</taxon>
        <taxon>Amoebozoa</taxon>
        <taxon>Evosea</taxon>
        <taxon>Eumycetozoa</taxon>
        <taxon>Dictyostelia</taxon>
        <taxon>Dictyosteliales</taxon>
        <taxon>Dictyosteliaceae</taxon>
        <taxon>Dictyostelium</taxon>
    </lineage>
</organism>
<dbReference type="EC" id="5.2.1.8"/>
<dbReference type="EMBL" id="AAFI02000005">
    <property type="protein sequence ID" value="EAL72368.1"/>
    <property type="molecule type" value="Genomic_DNA"/>
</dbReference>
<dbReference type="RefSeq" id="XP_646488.1">
    <property type="nucleotide sequence ID" value="XM_641396.1"/>
</dbReference>
<dbReference type="SMR" id="Q55CJ3"/>
<dbReference type="FunCoup" id="Q55CJ3">
    <property type="interactions" value="266"/>
</dbReference>
<dbReference type="STRING" id="44689.Q55CJ3"/>
<dbReference type="PaxDb" id="44689-DDB0237532"/>
<dbReference type="EnsemblProtists" id="EAL72368">
    <property type="protein sequence ID" value="EAL72368"/>
    <property type="gene ID" value="DDB_G0270036"/>
</dbReference>
<dbReference type="GeneID" id="8617450"/>
<dbReference type="KEGG" id="ddi:DDB_G0270036"/>
<dbReference type="dictyBase" id="DDB_G0270036">
    <property type="gene designation" value="ppp2r4"/>
</dbReference>
<dbReference type="VEuPathDB" id="AmoebaDB:DDB_G0270036"/>
<dbReference type="eggNOG" id="KOG2867">
    <property type="taxonomic scope" value="Eukaryota"/>
</dbReference>
<dbReference type="HOGENOM" id="CLU_030733_3_1_1"/>
<dbReference type="InParanoid" id="Q55CJ3"/>
<dbReference type="OMA" id="IHESQDV"/>
<dbReference type="PhylomeDB" id="Q55CJ3"/>
<dbReference type="PRO" id="PR:Q55CJ3"/>
<dbReference type="Proteomes" id="UP000002195">
    <property type="component" value="Chromosome 1"/>
</dbReference>
<dbReference type="GO" id="GO:0005737">
    <property type="term" value="C:cytoplasm"/>
    <property type="evidence" value="ECO:0000318"/>
    <property type="project" value="GO_Central"/>
</dbReference>
<dbReference type="GO" id="GO:0005634">
    <property type="term" value="C:nucleus"/>
    <property type="evidence" value="ECO:0000318"/>
    <property type="project" value="GO_Central"/>
</dbReference>
<dbReference type="GO" id="GO:0000159">
    <property type="term" value="C:protein phosphatase type 2A complex"/>
    <property type="evidence" value="ECO:0000318"/>
    <property type="project" value="GO_Central"/>
</dbReference>
<dbReference type="GO" id="GO:0003755">
    <property type="term" value="F:peptidyl-prolyl cis-trans isomerase activity"/>
    <property type="evidence" value="ECO:0000318"/>
    <property type="project" value="GO_Central"/>
</dbReference>
<dbReference type="GO" id="GO:0008160">
    <property type="term" value="F:protein tyrosine phosphatase activator activity"/>
    <property type="evidence" value="ECO:0000318"/>
    <property type="project" value="GO_Central"/>
</dbReference>
<dbReference type="GO" id="GO:0007052">
    <property type="term" value="P:mitotic spindle organization"/>
    <property type="evidence" value="ECO:0000318"/>
    <property type="project" value="GO_Central"/>
</dbReference>
<dbReference type="CDD" id="cd04087">
    <property type="entry name" value="PTPA"/>
    <property type="match status" value="1"/>
</dbReference>
<dbReference type="FunFam" id="1.20.120.1150:FF:000002">
    <property type="entry name" value="Serine/threonine-protein phosphatase 2A activator"/>
    <property type="match status" value="1"/>
</dbReference>
<dbReference type="Gene3D" id="1.20.120.1150">
    <property type="match status" value="1"/>
</dbReference>
<dbReference type="InterPro" id="IPR004327">
    <property type="entry name" value="Phstyr_phstse_ac"/>
</dbReference>
<dbReference type="InterPro" id="IPR043170">
    <property type="entry name" value="PTPA_C_lid"/>
</dbReference>
<dbReference type="InterPro" id="IPR037218">
    <property type="entry name" value="PTPA_sf"/>
</dbReference>
<dbReference type="PANTHER" id="PTHR10012">
    <property type="entry name" value="SERINE/THREONINE-PROTEIN PHOSPHATASE 2A REGULATORY SUBUNIT B"/>
    <property type="match status" value="1"/>
</dbReference>
<dbReference type="PANTHER" id="PTHR10012:SF0">
    <property type="entry name" value="SERINE_THREONINE-PROTEIN PHOSPHATASE 2A ACTIVATOR"/>
    <property type="match status" value="1"/>
</dbReference>
<dbReference type="Pfam" id="PF03095">
    <property type="entry name" value="PTPA"/>
    <property type="match status" value="1"/>
</dbReference>
<dbReference type="PIRSF" id="PIRSF016325">
    <property type="entry name" value="Phstyr_phstse_ac"/>
    <property type="match status" value="1"/>
</dbReference>
<dbReference type="SUPFAM" id="SSF140984">
    <property type="entry name" value="PTPA-like"/>
    <property type="match status" value="1"/>
</dbReference>
<comment type="function">
    <text evidence="1">PPIases accelerate the folding of proteins. It catalyzes the cis-trans isomerization of proline imidic peptide bonds in oligopeptides. Acts as a regulatory subunit for PP2A-like phosphatases modulating their activity or substrate specificity, probably by inducing a conformational change in the catalytic subunit, a direct target of the PPIase (By similarity).</text>
</comment>
<comment type="catalytic activity">
    <reaction>
        <text>[protein]-peptidylproline (omega=180) = [protein]-peptidylproline (omega=0)</text>
        <dbReference type="Rhea" id="RHEA:16237"/>
        <dbReference type="Rhea" id="RHEA-COMP:10747"/>
        <dbReference type="Rhea" id="RHEA-COMP:10748"/>
        <dbReference type="ChEBI" id="CHEBI:83833"/>
        <dbReference type="ChEBI" id="CHEBI:83834"/>
        <dbReference type="EC" id="5.2.1.8"/>
    </reaction>
</comment>
<comment type="subcellular location">
    <subcellularLocation>
        <location evidence="1">Cytoplasm</location>
    </subcellularLocation>
</comment>
<comment type="similarity">
    <text evidence="2">Belongs to the PTPA-type PPIase family.</text>
</comment>
<keyword id="KW-0963">Cytoplasm</keyword>
<keyword id="KW-0413">Isomerase</keyword>
<keyword id="KW-1185">Reference proteome</keyword>
<keyword id="KW-0697">Rotamase</keyword>
<proteinExistence type="inferred from homology"/>
<feature type="chain" id="PRO_0000328405" description="Probable serine/threonine-protein phosphatase 2A activator 1">
    <location>
        <begin position="1"/>
        <end position="325"/>
    </location>
</feature>
<reference key="1">
    <citation type="journal article" date="2005" name="Nature">
        <title>The genome of the social amoeba Dictyostelium discoideum.</title>
        <authorList>
            <person name="Eichinger L."/>
            <person name="Pachebat J.A."/>
            <person name="Gloeckner G."/>
            <person name="Rajandream M.A."/>
            <person name="Sucgang R."/>
            <person name="Berriman M."/>
            <person name="Song J."/>
            <person name="Olsen R."/>
            <person name="Szafranski K."/>
            <person name="Xu Q."/>
            <person name="Tunggal B."/>
            <person name="Kummerfeld S."/>
            <person name="Madera M."/>
            <person name="Konfortov B.A."/>
            <person name="Rivero F."/>
            <person name="Bankier A.T."/>
            <person name="Lehmann R."/>
            <person name="Hamlin N."/>
            <person name="Davies R."/>
            <person name="Gaudet P."/>
            <person name="Fey P."/>
            <person name="Pilcher K."/>
            <person name="Chen G."/>
            <person name="Saunders D."/>
            <person name="Sodergren E.J."/>
            <person name="Davis P."/>
            <person name="Kerhornou A."/>
            <person name="Nie X."/>
            <person name="Hall N."/>
            <person name="Anjard C."/>
            <person name="Hemphill L."/>
            <person name="Bason N."/>
            <person name="Farbrother P."/>
            <person name="Desany B."/>
            <person name="Just E."/>
            <person name="Morio T."/>
            <person name="Rost R."/>
            <person name="Churcher C.M."/>
            <person name="Cooper J."/>
            <person name="Haydock S."/>
            <person name="van Driessche N."/>
            <person name="Cronin A."/>
            <person name="Goodhead I."/>
            <person name="Muzny D.M."/>
            <person name="Mourier T."/>
            <person name="Pain A."/>
            <person name="Lu M."/>
            <person name="Harper D."/>
            <person name="Lindsay R."/>
            <person name="Hauser H."/>
            <person name="James K.D."/>
            <person name="Quiles M."/>
            <person name="Madan Babu M."/>
            <person name="Saito T."/>
            <person name="Buchrieser C."/>
            <person name="Wardroper A."/>
            <person name="Felder M."/>
            <person name="Thangavelu M."/>
            <person name="Johnson D."/>
            <person name="Knights A."/>
            <person name="Loulseged H."/>
            <person name="Mungall K.L."/>
            <person name="Oliver K."/>
            <person name="Price C."/>
            <person name="Quail M.A."/>
            <person name="Urushihara H."/>
            <person name="Hernandez J."/>
            <person name="Rabbinowitsch E."/>
            <person name="Steffen D."/>
            <person name="Sanders M."/>
            <person name="Ma J."/>
            <person name="Kohara Y."/>
            <person name="Sharp S."/>
            <person name="Simmonds M.N."/>
            <person name="Spiegler S."/>
            <person name="Tivey A."/>
            <person name="Sugano S."/>
            <person name="White B."/>
            <person name="Walker D."/>
            <person name="Woodward J.R."/>
            <person name="Winckler T."/>
            <person name="Tanaka Y."/>
            <person name="Shaulsky G."/>
            <person name="Schleicher M."/>
            <person name="Weinstock G.M."/>
            <person name="Rosenthal A."/>
            <person name="Cox E.C."/>
            <person name="Chisholm R.L."/>
            <person name="Gibbs R.A."/>
            <person name="Loomis W.F."/>
            <person name="Platzer M."/>
            <person name="Kay R.R."/>
            <person name="Williams J.G."/>
            <person name="Dear P.H."/>
            <person name="Noegel A.A."/>
            <person name="Barrell B.G."/>
            <person name="Kuspa A."/>
        </authorList>
    </citation>
    <scope>NUCLEOTIDE SEQUENCE [LARGE SCALE GENOMIC DNA]</scope>
    <source>
        <strain>AX4</strain>
    </source>
</reference>
<accession>Q55CJ3</accession>
<name>PTPA1_DICDI</name>
<evidence type="ECO:0000250" key="1"/>
<evidence type="ECO:0000305" key="2"/>
<sequence>MATTQQPEATEHQHFGVVEIKDLENHKFIKPVKVVTNEDDIKKFLRSGACRDLLEYIQTLSDKIKSKPNSTKTQNSNEIKNIVSMLNEISVYIDNIPPLAQPMRYGNKAYRTFYQKLLDNVEELHKHLLPQSMHSSIIELSSYLMDAMGNQTRLDYGTGHELHFVVWTYCLRRIGFLKSTDEEDIVLNVFTTYLDLVRKLQRVYGLEPAGTHGVWSLDDYQFIPFIWGASQLIGNPFDIKPASVTIEKVVDQYYKEYLYIACIKYINTVKKGPFHEHSRDLFNISGAASWQKINTGMMKKFYDDVLSKVPIIQHFLFGSLISFSV</sequence>
<gene>
    <name type="primary">ppp2r4A</name>
    <name type="synonym">ppp2r4</name>
    <name type="ORF">DDB_G0270036</name>
</gene>